<proteinExistence type="inferred from homology"/>
<feature type="chain" id="PRO_0000361139" description="Putative S-adenosyl-L-methionine-dependent methyltransferase Mb0752c">
    <location>
        <begin position="1"/>
        <end position="318"/>
    </location>
</feature>
<feature type="binding site" evidence="1">
    <location>
        <position position="135"/>
    </location>
    <ligand>
        <name>S-adenosyl-L-methionine</name>
        <dbReference type="ChEBI" id="CHEBI:59789"/>
    </ligand>
</feature>
<feature type="binding site" evidence="1">
    <location>
        <begin position="164"/>
        <end position="165"/>
    </location>
    <ligand>
        <name>S-adenosyl-L-methionine</name>
        <dbReference type="ChEBI" id="CHEBI:59789"/>
    </ligand>
</feature>
<sequence>MTQTGSARFEGDSWDLASSVGLTATMVAAARAVAGRAPGALVNDQFAEPLVRAVGVDFFVRMASGELDPDELAEDEANGLRRFADAMAIRTHYFDNFFLDATRAGIRQAVILASGLDSRAYRLRWPAGTIVFEVDQPQVIDFKTTTLAGLGAAPTTDRRTVAVDLRDDWPTALQKAGFDNAQRTAWIAEGLLGYLSAEAQDRLLDQITAQSVPGSQFATEVLRDINRLNEEELRGRMRRLAERFRRHGLDLDMSGLVYFGDRTDARTYLADHGWRTASASTTDLLAEHGLPPIDGDDAPFGEVIYVSAELKQKHQDTR</sequence>
<organism>
    <name type="scientific">Mycobacterium bovis (strain ATCC BAA-935 / AF2122/97)</name>
    <dbReference type="NCBI Taxonomy" id="233413"/>
    <lineage>
        <taxon>Bacteria</taxon>
        <taxon>Bacillati</taxon>
        <taxon>Actinomycetota</taxon>
        <taxon>Actinomycetes</taxon>
        <taxon>Mycobacteriales</taxon>
        <taxon>Mycobacteriaceae</taxon>
        <taxon>Mycobacterium</taxon>
        <taxon>Mycobacterium tuberculosis complex</taxon>
    </lineage>
</organism>
<accession>O53795</accession>
<accession>A0A1R3XW85</accession>
<accession>Q79BH8</accession>
<accession>X2BFU1</accession>
<gene>
    <name type="ordered locus">BQ2027_MB0752C</name>
</gene>
<name>Y752_MYCBO</name>
<dbReference type="EC" id="2.1.1.-"/>
<dbReference type="EMBL" id="U77912">
    <property type="protein sequence ID" value="AAD09882.1"/>
    <property type="molecule type" value="Genomic_DNA"/>
</dbReference>
<dbReference type="EMBL" id="LT708304">
    <property type="protein sequence ID" value="SIT99351.1"/>
    <property type="molecule type" value="Genomic_DNA"/>
</dbReference>
<dbReference type="PIR" id="F70822">
    <property type="entry name" value="F70822"/>
</dbReference>
<dbReference type="RefSeq" id="NP_854410.1">
    <property type="nucleotide sequence ID" value="NC_002945.3"/>
</dbReference>
<dbReference type="RefSeq" id="WP_003403717.1">
    <property type="nucleotide sequence ID" value="NC_002945.4"/>
</dbReference>
<dbReference type="SMR" id="O53795"/>
<dbReference type="KEGG" id="mbo:BQ2027_MB0752C"/>
<dbReference type="PATRIC" id="fig|233413.5.peg.819"/>
<dbReference type="Proteomes" id="UP000001419">
    <property type="component" value="Chromosome"/>
</dbReference>
<dbReference type="GO" id="GO:0008168">
    <property type="term" value="F:methyltransferase activity"/>
    <property type="evidence" value="ECO:0007669"/>
    <property type="project" value="UniProtKB-KW"/>
</dbReference>
<dbReference type="GO" id="GO:0032259">
    <property type="term" value="P:methylation"/>
    <property type="evidence" value="ECO:0007669"/>
    <property type="project" value="UniProtKB-KW"/>
</dbReference>
<dbReference type="Gene3D" id="3.40.50.150">
    <property type="entry name" value="Vaccinia Virus protein VP39"/>
    <property type="match status" value="1"/>
</dbReference>
<dbReference type="InterPro" id="IPR007213">
    <property type="entry name" value="Ppm1/Ppm2/Tcmp"/>
</dbReference>
<dbReference type="InterPro" id="IPR029063">
    <property type="entry name" value="SAM-dependent_MTases_sf"/>
</dbReference>
<dbReference type="InterPro" id="IPR011610">
    <property type="entry name" value="SAM_mthyl_Trfase_ML2640-like"/>
</dbReference>
<dbReference type="NCBIfam" id="TIGR00027">
    <property type="entry name" value="mthyl_TIGR00027"/>
    <property type="match status" value="1"/>
</dbReference>
<dbReference type="PANTHER" id="PTHR43619">
    <property type="entry name" value="S-ADENOSYL-L-METHIONINE-DEPENDENT METHYLTRANSFERASE YKTD-RELATED"/>
    <property type="match status" value="1"/>
</dbReference>
<dbReference type="PANTHER" id="PTHR43619:SF2">
    <property type="entry name" value="S-ADENOSYL-L-METHIONINE-DEPENDENT METHYLTRANSFERASES SUPERFAMILY PROTEIN"/>
    <property type="match status" value="1"/>
</dbReference>
<dbReference type="Pfam" id="PF04072">
    <property type="entry name" value="LCM"/>
    <property type="match status" value="1"/>
</dbReference>
<dbReference type="SUPFAM" id="SSF53335">
    <property type="entry name" value="S-adenosyl-L-methionine-dependent methyltransferases"/>
    <property type="match status" value="1"/>
</dbReference>
<comment type="function">
    <text evidence="1">Exhibits S-adenosyl-L-methionine-dependent methyltransferase activity.</text>
</comment>
<comment type="similarity">
    <text evidence="2">Belongs to the UPF0677 family.</text>
</comment>
<protein>
    <recommendedName>
        <fullName>Putative S-adenosyl-L-methionine-dependent methyltransferase Mb0752c</fullName>
        <ecNumber>2.1.1.-</ecNumber>
    </recommendedName>
</protein>
<evidence type="ECO:0000250" key="1"/>
<evidence type="ECO:0000305" key="2"/>
<keyword id="KW-0489">Methyltransferase</keyword>
<keyword id="KW-1185">Reference proteome</keyword>
<keyword id="KW-0949">S-adenosyl-L-methionine</keyword>
<keyword id="KW-0808">Transferase</keyword>
<reference key="1">
    <citation type="submission" date="1999-01" db="EMBL/GenBank/DDBJ databases">
        <title>Cloning and sequencing of Mycobacterium bovis BCG gene cluster containing secY gene.</title>
        <authorList>
            <person name="Kim J.K."/>
            <person name="Choe Y.K."/>
        </authorList>
    </citation>
    <scope>NUCLEOTIDE SEQUENCE [GENOMIC DNA]</scope>
    <source>
        <strain>BCG / Pasteur</strain>
    </source>
</reference>
<reference key="2">
    <citation type="journal article" date="2003" name="Proc. Natl. Acad. Sci. U.S.A.">
        <title>The complete genome sequence of Mycobacterium bovis.</title>
        <authorList>
            <person name="Garnier T."/>
            <person name="Eiglmeier K."/>
            <person name="Camus J.-C."/>
            <person name="Medina N."/>
            <person name="Mansoor H."/>
            <person name="Pryor M."/>
            <person name="Duthoy S."/>
            <person name="Grondin S."/>
            <person name="Lacroix C."/>
            <person name="Monsempe C."/>
            <person name="Simon S."/>
            <person name="Harris B."/>
            <person name="Atkin R."/>
            <person name="Doggett J."/>
            <person name="Mayes R."/>
            <person name="Keating L."/>
            <person name="Wheeler P.R."/>
            <person name="Parkhill J."/>
            <person name="Barrell B.G."/>
            <person name="Cole S.T."/>
            <person name="Gordon S.V."/>
            <person name="Hewinson R.G."/>
        </authorList>
    </citation>
    <scope>NUCLEOTIDE SEQUENCE [LARGE SCALE GENOMIC DNA]</scope>
    <source>
        <strain>ATCC BAA-935 / AF2122/97</strain>
    </source>
</reference>
<reference key="3">
    <citation type="journal article" date="2017" name="Genome Announc.">
        <title>Updated reference genome sequence and annotation of Mycobacterium bovis AF2122/97.</title>
        <authorList>
            <person name="Malone K.M."/>
            <person name="Farrell D."/>
            <person name="Stuber T.P."/>
            <person name="Schubert O.T."/>
            <person name="Aebersold R."/>
            <person name="Robbe-Austerman S."/>
            <person name="Gordon S.V."/>
        </authorList>
    </citation>
    <scope>NUCLEOTIDE SEQUENCE [LARGE SCALE GENOMIC DNA]</scope>
    <scope>GENOME REANNOTATION</scope>
    <source>
        <strain>ATCC BAA-935 / AF2122/97</strain>
    </source>
</reference>